<protein>
    <recommendedName>
        <fullName evidence="13">Ran-binding protein 9</fullName>
        <shortName>RanBP9</shortName>
    </recommendedName>
    <alternativeName>
        <fullName>B-cell antigen receptor Ig beta-associated protein 1</fullName>
        <shortName>IBAP-1</shortName>
    </alternativeName>
    <alternativeName>
        <fullName>Ran-binding protein M</fullName>
        <shortName>RanBPM</shortName>
    </alternativeName>
</protein>
<keyword id="KW-0007">Acetylation</keyword>
<keyword id="KW-0025">Alternative splicing</keyword>
<keyword id="KW-1003">Cell membrane</keyword>
<keyword id="KW-0963">Cytoplasm</keyword>
<keyword id="KW-0472">Membrane</keyword>
<keyword id="KW-0539">Nucleus</keyword>
<keyword id="KW-0597">Phosphoprotein</keyword>
<keyword id="KW-1185">Reference proteome</keyword>
<keyword id="KW-0832">Ubl conjugation</keyword>
<proteinExistence type="evidence at protein level"/>
<accession>P69566</accession>
<accession>P84500</accession>
<accession>Q3V136</accession>
<gene>
    <name evidence="15" type="primary">Ranbp9</name>
    <name type="synonym">Ranbpm</name>
</gene>
<comment type="function">
    <text evidence="2">May act as scaffolding protein, and as adapter protein to couple membrane receptors to intracellular signaling pathways. Acts as a mediator of cell spreading and actin cytoskeleton rearrangement. Core component of the CTLH E3 ubiquitin-protein ligase complex that selectively accepts ubiquitin from UBE2H and mediates ubiquitination and subsequent proteasomal degradation of the transcription factor HBP1. May be involved in signaling of ITGB2/LFA-1 and other integrins. Enhances HGF-MET signaling by recruiting Sos and activating the Ras pathway. Enhances dihydrotestosterone-induced transactivation activity of AR, as well as dexamethasone-induced transactivation activity of NR3C1, but not affect estrogen-induced transactivation. Stabilizes TP73 isoform Alpha, probably by inhibiting its ubiquitination, and increases its proapoptotic activity. Inhibits the kinase activity of DYRK1A and DYRK1B. Inhibits FMR1 binding to RNA.</text>
</comment>
<comment type="subunit">
    <text evidence="2 7 8 10 11">Part of a complex consisting of RANBP9, MKLN1 and GID8. Identified in the CTLH complex that contains GID4, RANBP9 and/or RANBP10, MKLN1, MAEA, RMND5A (or alternatively its paralog RMND5B), GID8, ARMC8, WDR26 and YPEL5. Within this complex, MAEA, RMND5A (or alternatively its paralog RMND5B), GID8, WDR26, and RANBP9 and/or RANBP10 form the catalytic core, while GID4, MKLN1, ARMC8 and YPEL5 have ancillary roles. Interacts with GTP-bound Ran, AR, CDC2L1/p110C, CALB1, S100A7, USP11, SOS1 or SOS2, GID8, and FMR1. Interacts with the Dyrk kinases HIPK2, DYRK1A, and DYRK1B. Interacts with TP73 isoform Alpha but not with TP53. Interacts with the HGF receptor MET and the integrins ITGB1 and ITGB2, but not with ITGAL. Part of a complex consisting of RANBP9, RAN, DYRK1B and COPS5. Directly interacts with RANBP10. Interacts with YPEL5 (By similarity). Interacts with MKLN1 (PubMed:18710924). Interacts with DDX4 (PubMed:14648869). Interacts with NGFR (PubMed:12963025). Interacts with Tex19.1 and, probably, Tex19.2 (PubMed:28254886).</text>
</comment>
<comment type="interaction">
    <interactant intactId="EBI-772305">
        <id>P69566</id>
    </interactant>
    <interactant intactId="EBI-8294317">
        <id>Q9JI18</id>
        <label>Lrp1b</label>
    </interactant>
    <organismsDiffer>false</organismsDiffer>
    <experiments>2</experiments>
</comment>
<comment type="subcellular location">
    <subcellularLocation>
        <location evidence="10">Cytoplasm</location>
    </subcellularLocation>
    <subcellularLocation>
        <location evidence="14">Cell membrane</location>
        <topology evidence="14">Peripheral membrane protein</topology>
        <orientation evidence="14">Cytoplasmic side</orientation>
    </subcellularLocation>
    <subcellularLocation>
        <location evidence="10">Nucleus</location>
    </subcellularLocation>
    <text evidence="2 8 10">Predominantly cytoplasmic (PubMed:18710924). A phosphorylated form is associated with the plasma membrane (By similarity). Perinuclear in spermatids (PubMed:14648869).</text>
</comment>
<comment type="alternative products">
    <event type="alternative splicing"/>
    <isoform>
        <id>P69566-1</id>
        <name>1</name>
        <sequence type="displayed"/>
    </isoform>
    <isoform>
        <id>P69566-2</id>
        <name>2</name>
        <sequence type="described" ref="VSP_028266 VSP_028267"/>
    </isoform>
</comment>
<comment type="tissue specificity">
    <text evidence="8 9">Ubiquitously expressed, with highest levels in maturating spermatocytes.</text>
</comment>
<comment type="domain">
    <text evidence="2">The SPRY domain mediates the interaction with MET, AR, and CDC2L1.</text>
</comment>
<comment type="PTM">
    <text evidence="2">Phosphorylated in response to stress.</text>
</comment>
<comment type="PTM">
    <text evidence="2">Ubiquitinated. Polyubiquitination targets the protein for rapid degradation via the ubiquitin system (By similarity).</text>
</comment>
<comment type="similarity">
    <text evidence="13">Belongs to the RANBP9/10 family.</text>
</comment>
<feature type="chain" id="PRO_0000097170" description="Ran-binding protein 9">
    <location>
        <begin position="1"/>
        <end position="653"/>
    </location>
</feature>
<feature type="domain" description="B30.2/SPRY" evidence="5">
    <location>
        <begin position="72"/>
        <end position="259"/>
    </location>
</feature>
<feature type="domain" description="LisH" evidence="4">
    <location>
        <begin position="290"/>
        <end position="322"/>
    </location>
</feature>
<feature type="domain" description="CTLH" evidence="3">
    <location>
        <begin position="328"/>
        <end position="385"/>
    </location>
</feature>
<feature type="region of interest" description="Disordered" evidence="6">
    <location>
        <begin position="1"/>
        <end position="62"/>
    </location>
</feature>
<feature type="region of interest" description="Interaction with CALB1" evidence="1">
    <location>
        <begin position="326"/>
        <end position="332"/>
    </location>
</feature>
<feature type="region of interest" description="Disordered" evidence="6">
    <location>
        <begin position="386"/>
        <end position="422"/>
    </location>
</feature>
<feature type="region of interest" description="Interaction with FMR1" evidence="1">
    <location>
        <begin position="539"/>
        <end position="653"/>
    </location>
</feature>
<feature type="compositionally biased region" description="Pro residues" evidence="6">
    <location>
        <begin position="1"/>
        <end position="21"/>
    </location>
</feature>
<feature type="compositionally biased region" description="Low complexity" evidence="6">
    <location>
        <begin position="22"/>
        <end position="57"/>
    </location>
</feature>
<feature type="compositionally biased region" description="Low complexity" evidence="6">
    <location>
        <begin position="398"/>
        <end position="421"/>
    </location>
</feature>
<feature type="modified residue" description="N6-acetyllysine" evidence="2">
    <location>
        <position position="330"/>
    </location>
</feature>
<feature type="modified residue" description="Phosphoserine" evidence="16">
    <location>
        <position position="402"/>
    </location>
</feature>
<feature type="modified residue" description="Phosphoserine" evidence="16">
    <location>
        <position position="412"/>
    </location>
</feature>
<feature type="splice variant" id="VSP_028266" description="In isoform 2." evidence="12">
    <location>
        <begin position="1"/>
        <end position="107"/>
    </location>
</feature>
<feature type="splice variant" id="VSP_028267" description="In isoform 2." evidence="12">
    <original>NNLRVHYK</original>
    <variation>MWESSWVL</variation>
    <location>
        <begin position="108"/>
        <end position="115"/>
    </location>
</feature>
<feature type="sequence conflict" description="In Ref. 4." evidence="13" ref="4">
    <original>R</original>
    <variation>P</variation>
    <location>
        <position position="92"/>
    </location>
</feature>
<evidence type="ECO:0000250" key="1"/>
<evidence type="ECO:0000250" key="2">
    <source>
        <dbReference type="UniProtKB" id="Q96S59"/>
    </source>
</evidence>
<evidence type="ECO:0000255" key="3">
    <source>
        <dbReference type="PROSITE-ProRule" id="PRU00058"/>
    </source>
</evidence>
<evidence type="ECO:0000255" key="4">
    <source>
        <dbReference type="PROSITE-ProRule" id="PRU00126"/>
    </source>
</evidence>
<evidence type="ECO:0000255" key="5">
    <source>
        <dbReference type="PROSITE-ProRule" id="PRU00548"/>
    </source>
</evidence>
<evidence type="ECO:0000256" key="6">
    <source>
        <dbReference type="SAM" id="MobiDB-lite"/>
    </source>
</evidence>
<evidence type="ECO:0000269" key="7">
    <source>
    </source>
</evidence>
<evidence type="ECO:0000269" key="8">
    <source>
    </source>
</evidence>
<evidence type="ECO:0000269" key="9">
    <source>
    </source>
</evidence>
<evidence type="ECO:0000269" key="10">
    <source>
    </source>
</evidence>
<evidence type="ECO:0000269" key="11">
    <source>
    </source>
</evidence>
<evidence type="ECO:0000303" key="12">
    <source>
    </source>
</evidence>
<evidence type="ECO:0000305" key="13"/>
<evidence type="ECO:0000305" key="14">
    <source>
    </source>
</evidence>
<evidence type="ECO:0000312" key="15">
    <source>
        <dbReference type="MGI" id="MGI:1928741"/>
    </source>
</evidence>
<evidence type="ECO:0007744" key="16">
    <source>
    </source>
</evidence>
<name>RANB9_MOUSE</name>
<sequence>MSGQPPPPPPQQQPPPPPPPASAAAPATAPPGLAVGPGPAAGVPVPGLAAGSSAAAPFPHGDSALNEQEKELQRRLKRLYPAVDEQETPLPRSWSPKDKFSYIGLSQNNLRVHYKGHGKTPKDAASVRATHPIPAACGIYYFEVKIVSKGRDGYMGIGLSAQGVNMNRLPGWDKHSYGYHGDDGHSFCSSGTGQPYGPTFTTGDVIGCCVNLINNTCFYTKNGHSLGIAFTDLPPNLYPTVGLQTPGEVVDANFGQHPFVFDIEDYMREWRTKIQAQIDRFPIGDREGEWQTMIQKMVSSYLVHHGYCATAEAFARSTDQTVLEELASIKNRQRIQKLVLAGRMGEAIETTQQLYPSLLERNPNLLFTLKVRQFIEMVNGTDSEVRCLGGRSPKSQDSYPVSPRPFSSPSMSPSHGMSIHSLAPGKSSTAHFSGFESCSNGVISNKAHQSYCHSKHQLSSLTVPELNSLNVSRSQQVNNFTSNDVDMETDHYSNGVGETSSNGFLNGSSKHDHEMEDCDTEMEVDCSQLRRQLCGGSQAAIERMIHFGRELQAMSEQLRRECGKNTANKKMLKDAFSLLAYSDPWNSPVGNQLDPIQREPVCSALNSAILETHNLPKQPPLALAMGQATQCLGLMARSGVGSCAFATVEDYLH</sequence>
<reference key="1">
    <citation type="journal article" date="2004" name="Mol. Reprod. Dev.">
        <title>Mouse RanBPM is a partner gene to a germline specific RNA helicase, mouse vasa homolog protein.</title>
        <authorList>
            <person name="Shibata N."/>
            <person name="Tsunekawa N."/>
            <person name="Okamoto-Ito S."/>
            <person name="Akasu R."/>
            <person name="Tokumasu A."/>
            <person name="Noce T."/>
        </authorList>
    </citation>
    <scope>NUCLEOTIDE SEQUENCE [MRNA] (ISOFORM 1)</scope>
    <scope>INTERACTION WITH DDX4</scope>
    <scope>TISSUE SPECIFICITY</scope>
    <scope>SUBCELLULAR LOCATION</scope>
    <source>
        <tissue>Testis</tissue>
    </source>
</reference>
<reference key="2">
    <citation type="submission" date="1997-06" db="EMBL/GenBank/DDBJ databases">
        <title>B cell antigen receptor Ig beta associated protein.</title>
        <authorList>
            <person name="Doi T."/>
            <person name="Watanabe T."/>
        </authorList>
    </citation>
    <scope>NUCLEOTIDE SEQUENCE [MRNA] (ISOFORM 1)</scope>
</reference>
<reference key="3">
    <citation type="journal article" date="2005" name="Science">
        <title>The transcriptional landscape of the mammalian genome.</title>
        <authorList>
            <person name="Carninci P."/>
            <person name="Kasukawa T."/>
            <person name="Katayama S."/>
            <person name="Gough J."/>
            <person name="Frith M.C."/>
            <person name="Maeda N."/>
            <person name="Oyama R."/>
            <person name="Ravasi T."/>
            <person name="Lenhard B."/>
            <person name="Wells C."/>
            <person name="Kodzius R."/>
            <person name="Shimokawa K."/>
            <person name="Bajic V.B."/>
            <person name="Brenner S.E."/>
            <person name="Batalov S."/>
            <person name="Forrest A.R."/>
            <person name="Zavolan M."/>
            <person name="Davis M.J."/>
            <person name="Wilming L.G."/>
            <person name="Aidinis V."/>
            <person name="Allen J.E."/>
            <person name="Ambesi-Impiombato A."/>
            <person name="Apweiler R."/>
            <person name="Aturaliya R.N."/>
            <person name="Bailey T.L."/>
            <person name="Bansal M."/>
            <person name="Baxter L."/>
            <person name="Beisel K.W."/>
            <person name="Bersano T."/>
            <person name="Bono H."/>
            <person name="Chalk A.M."/>
            <person name="Chiu K.P."/>
            <person name="Choudhary V."/>
            <person name="Christoffels A."/>
            <person name="Clutterbuck D.R."/>
            <person name="Crowe M.L."/>
            <person name="Dalla E."/>
            <person name="Dalrymple B.P."/>
            <person name="de Bono B."/>
            <person name="Della Gatta G."/>
            <person name="di Bernardo D."/>
            <person name="Down T."/>
            <person name="Engstrom P."/>
            <person name="Fagiolini M."/>
            <person name="Faulkner G."/>
            <person name="Fletcher C.F."/>
            <person name="Fukushima T."/>
            <person name="Furuno M."/>
            <person name="Futaki S."/>
            <person name="Gariboldi M."/>
            <person name="Georgii-Hemming P."/>
            <person name="Gingeras T.R."/>
            <person name="Gojobori T."/>
            <person name="Green R.E."/>
            <person name="Gustincich S."/>
            <person name="Harbers M."/>
            <person name="Hayashi Y."/>
            <person name="Hensch T.K."/>
            <person name="Hirokawa N."/>
            <person name="Hill D."/>
            <person name="Huminiecki L."/>
            <person name="Iacono M."/>
            <person name="Ikeo K."/>
            <person name="Iwama A."/>
            <person name="Ishikawa T."/>
            <person name="Jakt M."/>
            <person name="Kanapin A."/>
            <person name="Katoh M."/>
            <person name="Kawasawa Y."/>
            <person name="Kelso J."/>
            <person name="Kitamura H."/>
            <person name="Kitano H."/>
            <person name="Kollias G."/>
            <person name="Krishnan S.P."/>
            <person name="Kruger A."/>
            <person name="Kummerfeld S.K."/>
            <person name="Kurochkin I.V."/>
            <person name="Lareau L.F."/>
            <person name="Lazarevic D."/>
            <person name="Lipovich L."/>
            <person name="Liu J."/>
            <person name="Liuni S."/>
            <person name="McWilliam S."/>
            <person name="Madan Babu M."/>
            <person name="Madera M."/>
            <person name="Marchionni L."/>
            <person name="Matsuda H."/>
            <person name="Matsuzawa S."/>
            <person name="Miki H."/>
            <person name="Mignone F."/>
            <person name="Miyake S."/>
            <person name="Morris K."/>
            <person name="Mottagui-Tabar S."/>
            <person name="Mulder N."/>
            <person name="Nakano N."/>
            <person name="Nakauchi H."/>
            <person name="Ng P."/>
            <person name="Nilsson R."/>
            <person name="Nishiguchi S."/>
            <person name="Nishikawa S."/>
            <person name="Nori F."/>
            <person name="Ohara O."/>
            <person name="Okazaki Y."/>
            <person name="Orlando V."/>
            <person name="Pang K.C."/>
            <person name="Pavan W.J."/>
            <person name="Pavesi G."/>
            <person name="Pesole G."/>
            <person name="Petrovsky N."/>
            <person name="Piazza S."/>
            <person name="Reed J."/>
            <person name="Reid J.F."/>
            <person name="Ring B.Z."/>
            <person name="Ringwald M."/>
            <person name="Rost B."/>
            <person name="Ruan Y."/>
            <person name="Salzberg S.L."/>
            <person name="Sandelin A."/>
            <person name="Schneider C."/>
            <person name="Schoenbach C."/>
            <person name="Sekiguchi K."/>
            <person name="Semple C.A."/>
            <person name="Seno S."/>
            <person name="Sessa L."/>
            <person name="Sheng Y."/>
            <person name="Shibata Y."/>
            <person name="Shimada H."/>
            <person name="Shimada K."/>
            <person name="Silva D."/>
            <person name="Sinclair B."/>
            <person name="Sperling S."/>
            <person name="Stupka E."/>
            <person name="Sugiura K."/>
            <person name="Sultana R."/>
            <person name="Takenaka Y."/>
            <person name="Taki K."/>
            <person name="Tammoja K."/>
            <person name="Tan S.L."/>
            <person name="Tang S."/>
            <person name="Taylor M.S."/>
            <person name="Tegner J."/>
            <person name="Teichmann S.A."/>
            <person name="Ueda H.R."/>
            <person name="van Nimwegen E."/>
            <person name="Verardo R."/>
            <person name="Wei C.L."/>
            <person name="Yagi K."/>
            <person name="Yamanishi H."/>
            <person name="Zabarovsky E."/>
            <person name="Zhu S."/>
            <person name="Zimmer A."/>
            <person name="Hide W."/>
            <person name="Bult C."/>
            <person name="Grimmond S.M."/>
            <person name="Teasdale R.D."/>
            <person name="Liu E.T."/>
            <person name="Brusic V."/>
            <person name="Quackenbush J."/>
            <person name="Wahlestedt C."/>
            <person name="Mattick J.S."/>
            <person name="Hume D.A."/>
            <person name="Kai C."/>
            <person name="Sasaki D."/>
            <person name="Tomaru Y."/>
            <person name="Fukuda S."/>
            <person name="Kanamori-Katayama M."/>
            <person name="Suzuki M."/>
            <person name="Aoki J."/>
            <person name="Arakawa T."/>
            <person name="Iida J."/>
            <person name="Imamura K."/>
            <person name="Itoh M."/>
            <person name="Kato T."/>
            <person name="Kawaji H."/>
            <person name="Kawagashira N."/>
            <person name="Kawashima T."/>
            <person name="Kojima M."/>
            <person name="Kondo S."/>
            <person name="Konno H."/>
            <person name="Nakano K."/>
            <person name="Ninomiya N."/>
            <person name="Nishio T."/>
            <person name="Okada M."/>
            <person name="Plessy C."/>
            <person name="Shibata K."/>
            <person name="Shiraki T."/>
            <person name="Suzuki S."/>
            <person name="Tagami M."/>
            <person name="Waki K."/>
            <person name="Watahiki A."/>
            <person name="Okamura-Oho Y."/>
            <person name="Suzuki H."/>
            <person name="Kawai J."/>
            <person name="Hayashizaki Y."/>
        </authorList>
    </citation>
    <scope>NUCLEOTIDE SEQUENCE [LARGE SCALE MRNA] (ISOFORM 2)</scope>
    <source>
        <strain>C57BL/6J</strain>
        <tissue>Testis</tissue>
    </source>
</reference>
<reference key="4">
    <citation type="journal article" date="2003" name="Biochem. Biophys. Res. Commun.">
        <title>RanBPM is a novel binding protein for p75NTR.</title>
        <authorList>
            <person name="Bai D."/>
            <person name="Chen H."/>
            <person name="Huang B.-R."/>
        </authorList>
    </citation>
    <scope>NUCLEOTIDE SEQUENCE [MRNA] OF 42-653 (ISOFORM 1)</scope>
    <scope>INTERACTION WITH NGFR</scope>
    <source>
        <tissue>Brain</tissue>
    </source>
</reference>
<reference key="5">
    <citation type="journal article" date="2004" name="J. Biol. Chem.">
        <title>RanBPM is a phosphoprotein that associates with the plasma membrane and interacts with the integrin LFA-1.</title>
        <authorList>
            <person name="Denti S."/>
            <person name="Sirri A."/>
            <person name="Cheli A."/>
            <person name="Rogge L."/>
            <person name="Innamorati G."/>
            <person name="Putignano S."/>
            <person name="Fabbri M."/>
            <person name="Pardi R."/>
            <person name="Bianchi E."/>
        </authorList>
    </citation>
    <scope>TISSUE SPECIFICITY</scope>
</reference>
<reference key="6">
    <citation type="journal article" date="2008" name="J. Cell Biol.">
        <title>Novel role of the muskelin-RanBP9 complex as a nucleocytoplasmic mediator of cell morphology regulation.</title>
        <authorList>
            <person name="Valiyaveettil M."/>
            <person name="Bentley A.A."/>
            <person name="Gursahaney P."/>
            <person name="Hussien R."/>
            <person name="Chakravarti R."/>
            <person name="Kureishy N."/>
            <person name="Prag S."/>
            <person name="Adams J.C."/>
        </authorList>
    </citation>
    <scope>INTERACTION WITH MKLN1</scope>
    <scope>SUBCELLULAR LOCATION</scope>
</reference>
<reference key="7">
    <citation type="journal article" date="2010" name="Cell">
        <title>A tissue-specific atlas of mouse protein phosphorylation and expression.</title>
        <authorList>
            <person name="Huttlin E.L."/>
            <person name="Jedrychowski M.P."/>
            <person name="Elias J.E."/>
            <person name="Goswami T."/>
            <person name="Rad R."/>
            <person name="Beausoleil S.A."/>
            <person name="Villen J."/>
            <person name="Haas W."/>
            <person name="Sowa M.E."/>
            <person name="Gygi S.P."/>
        </authorList>
    </citation>
    <scope>PHOSPHORYLATION [LARGE SCALE ANALYSIS] AT SER-402 AND SER-412</scope>
    <scope>IDENTIFICATION BY MASS SPECTROMETRY [LARGE SCALE ANALYSIS]</scope>
    <source>
        <tissue>Brain</tissue>
        <tissue>Spleen</tissue>
        <tissue>Testis</tissue>
    </source>
</reference>
<reference key="8">
    <citation type="journal article" date="2017" name="J. Cell Sci.">
        <title>Tex19 paralogs are new members of the piRNA pathway controlling retrotransposon suppression.</title>
        <authorList>
            <person name="Tarabay Y."/>
            <person name="Achour M."/>
            <person name="Teletin M."/>
            <person name="Ye T."/>
            <person name="Teissandier A."/>
            <person name="Mark M."/>
            <person name="Bourc'his D."/>
            <person name="Viville S."/>
        </authorList>
    </citation>
    <scope>INTERACTION WITH TEX19.1</scope>
</reference>
<organism>
    <name type="scientific">Mus musculus</name>
    <name type="common">Mouse</name>
    <dbReference type="NCBI Taxonomy" id="10090"/>
    <lineage>
        <taxon>Eukaryota</taxon>
        <taxon>Metazoa</taxon>
        <taxon>Chordata</taxon>
        <taxon>Craniata</taxon>
        <taxon>Vertebrata</taxon>
        <taxon>Euteleostomi</taxon>
        <taxon>Mammalia</taxon>
        <taxon>Eutheria</taxon>
        <taxon>Euarchontoglires</taxon>
        <taxon>Glires</taxon>
        <taxon>Rodentia</taxon>
        <taxon>Myomorpha</taxon>
        <taxon>Muroidea</taxon>
        <taxon>Muridae</taxon>
        <taxon>Murinae</taxon>
        <taxon>Mus</taxon>
        <taxon>Mus</taxon>
    </lineage>
</organism>
<dbReference type="EMBL" id="AF006465">
    <property type="protein sequence ID" value="AAD01272.1"/>
    <property type="molecule type" value="mRNA"/>
</dbReference>
<dbReference type="EMBL" id="AK132714">
    <property type="protein sequence ID" value="BAE21317.1"/>
    <property type="molecule type" value="mRNA"/>
</dbReference>
<dbReference type="PIR" id="JC8013">
    <property type="entry name" value="JC8013"/>
</dbReference>
<dbReference type="RefSeq" id="NP_001391577.1">
    <molecule id="P69566-2"/>
    <property type="nucleotide sequence ID" value="NM_001404648.1"/>
</dbReference>
<dbReference type="RefSeq" id="NP_064314.2">
    <property type="nucleotide sequence ID" value="NM_019930.2"/>
</dbReference>
<dbReference type="SMR" id="P69566"/>
<dbReference type="BioGRID" id="208133">
    <property type="interactions" value="16"/>
</dbReference>
<dbReference type="FunCoup" id="P69566">
    <property type="interactions" value="4303"/>
</dbReference>
<dbReference type="IntAct" id="P69566">
    <property type="interactions" value="8"/>
</dbReference>
<dbReference type="MINT" id="P69566"/>
<dbReference type="STRING" id="10090.ENSMUSP00000130636"/>
<dbReference type="GlyGen" id="P69566">
    <property type="glycosylation" value="1 site"/>
</dbReference>
<dbReference type="iPTMnet" id="P69566"/>
<dbReference type="PhosphoSitePlus" id="P69566"/>
<dbReference type="PaxDb" id="10090-ENSMUSP00000130636"/>
<dbReference type="PeptideAtlas" id="P69566"/>
<dbReference type="ProteomicsDB" id="255093">
    <molecule id="P69566-1"/>
</dbReference>
<dbReference type="ProteomicsDB" id="255094">
    <molecule id="P69566-2"/>
</dbReference>
<dbReference type="Pumba" id="P69566"/>
<dbReference type="Antibodypedia" id="24991">
    <property type="antibodies" value="275 antibodies from 34 providers"/>
</dbReference>
<dbReference type="DNASU" id="56705"/>
<dbReference type="Ensembl" id="ENSMUST00000222651.2">
    <molecule id="P69566-2"/>
    <property type="protein sequence ID" value="ENSMUSP00000152620.2"/>
    <property type="gene ID" value="ENSMUSG00000038546.10"/>
</dbReference>
<dbReference type="GeneID" id="56705"/>
<dbReference type="KEGG" id="mmu:56705"/>
<dbReference type="AGR" id="MGI:1928741"/>
<dbReference type="CTD" id="10048"/>
<dbReference type="MGI" id="MGI:1928741">
    <property type="gene designation" value="Ranbp9"/>
</dbReference>
<dbReference type="VEuPathDB" id="HostDB:ENSMUSG00000038546"/>
<dbReference type="eggNOG" id="KOG1477">
    <property type="taxonomic scope" value="Eukaryota"/>
</dbReference>
<dbReference type="GeneTree" id="ENSGT00940000157305"/>
<dbReference type="InParanoid" id="P69566"/>
<dbReference type="OrthoDB" id="25503at2759"/>
<dbReference type="PhylomeDB" id="P69566"/>
<dbReference type="Reactome" id="R-MMU-373760">
    <property type="pathway name" value="L1CAM interactions"/>
</dbReference>
<dbReference type="Reactome" id="R-MMU-5673001">
    <property type="pathway name" value="RAF/MAP kinase cascade"/>
</dbReference>
<dbReference type="Reactome" id="R-MMU-8851805">
    <property type="pathway name" value="MET activates RAS signaling"/>
</dbReference>
<dbReference type="Reactome" id="R-MMU-9861718">
    <property type="pathway name" value="Regulation of pyruvate metabolism"/>
</dbReference>
<dbReference type="BioGRID-ORCS" id="56705">
    <property type="hits" value="2 hits in 77 CRISPR screens"/>
</dbReference>
<dbReference type="CD-CODE" id="DE1E139C">
    <property type="entry name" value="Chromatoid body"/>
</dbReference>
<dbReference type="ChiTaRS" id="Ranbp9">
    <property type="organism name" value="mouse"/>
</dbReference>
<dbReference type="PRO" id="PR:P69566"/>
<dbReference type="Proteomes" id="UP000000589">
    <property type="component" value="Chromosome 13"/>
</dbReference>
<dbReference type="RNAct" id="P69566">
    <property type="molecule type" value="protein"/>
</dbReference>
<dbReference type="Bgee" id="ENSMUSG00000038546">
    <property type="expression patterns" value="Expressed in animal zygote and 247 other cell types or tissues"/>
</dbReference>
<dbReference type="ExpressionAtlas" id="P69566">
    <property type="expression patterns" value="baseline and differential"/>
</dbReference>
<dbReference type="GO" id="GO:0005737">
    <property type="term" value="C:cytoplasm"/>
    <property type="evidence" value="ECO:0000314"/>
    <property type="project" value="MGI"/>
</dbReference>
<dbReference type="GO" id="GO:0005634">
    <property type="term" value="C:nucleus"/>
    <property type="evidence" value="ECO:0000250"/>
    <property type="project" value="UniProtKB"/>
</dbReference>
<dbReference type="GO" id="GO:0005886">
    <property type="term" value="C:plasma membrane"/>
    <property type="evidence" value="ECO:0007669"/>
    <property type="project" value="UniProtKB-SubCell"/>
</dbReference>
<dbReference type="GO" id="GO:0031267">
    <property type="term" value="F:small GTPase binding"/>
    <property type="evidence" value="ECO:0000266"/>
    <property type="project" value="MGI"/>
</dbReference>
<dbReference type="CDD" id="cd12909">
    <property type="entry name" value="SPRY_RanBP9_10"/>
    <property type="match status" value="1"/>
</dbReference>
<dbReference type="FunFam" id="2.60.120.920:FF:000011">
    <property type="entry name" value="RAN binding protein 10"/>
    <property type="match status" value="1"/>
</dbReference>
<dbReference type="Gene3D" id="2.60.120.920">
    <property type="match status" value="1"/>
</dbReference>
<dbReference type="InterPro" id="IPR001870">
    <property type="entry name" value="B30.2/SPRY"/>
</dbReference>
<dbReference type="InterPro" id="IPR043136">
    <property type="entry name" value="B30.2/SPRY_sf"/>
</dbReference>
<dbReference type="InterPro" id="IPR013320">
    <property type="entry name" value="ConA-like_dom_sf"/>
</dbReference>
<dbReference type="InterPro" id="IPR013144">
    <property type="entry name" value="CRA_dom"/>
</dbReference>
<dbReference type="InterPro" id="IPR024964">
    <property type="entry name" value="CTLH/CRA"/>
</dbReference>
<dbReference type="InterPro" id="IPR006595">
    <property type="entry name" value="CTLH_C"/>
</dbReference>
<dbReference type="InterPro" id="IPR006594">
    <property type="entry name" value="LisH"/>
</dbReference>
<dbReference type="InterPro" id="IPR003877">
    <property type="entry name" value="SPRY_dom"/>
</dbReference>
<dbReference type="InterPro" id="IPR035782">
    <property type="entry name" value="SPRY_RanBP9/10"/>
</dbReference>
<dbReference type="InterPro" id="IPR050618">
    <property type="entry name" value="Ubq-SigPath_Reg"/>
</dbReference>
<dbReference type="PANTHER" id="PTHR12864">
    <property type="entry name" value="RAN BINDING PROTEIN 9-RELATED"/>
    <property type="match status" value="1"/>
</dbReference>
<dbReference type="Pfam" id="PF10607">
    <property type="entry name" value="CTLH"/>
    <property type="match status" value="2"/>
</dbReference>
<dbReference type="Pfam" id="PF08513">
    <property type="entry name" value="LisH"/>
    <property type="match status" value="1"/>
</dbReference>
<dbReference type="Pfam" id="PF00622">
    <property type="entry name" value="SPRY"/>
    <property type="match status" value="1"/>
</dbReference>
<dbReference type="SMART" id="SM00757">
    <property type="entry name" value="CRA"/>
    <property type="match status" value="1"/>
</dbReference>
<dbReference type="SMART" id="SM00668">
    <property type="entry name" value="CTLH"/>
    <property type="match status" value="1"/>
</dbReference>
<dbReference type="SMART" id="SM00667">
    <property type="entry name" value="LisH"/>
    <property type="match status" value="1"/>
</dbReference>
<dbReference type="SMART" id="SM00449">
    <property type="entry name" value="SPRY"/>
    <property type="match status" value="1"/>
</dbReference>
<dbReference type="SUPFAM" id="SSF49899">
    <property type="entry name" value="Concanavalin A-like lectins/glucanases"/>
    <property type="match status" value="1"/>
</dbReference>
<dbReference type="PROSITE" id="PS50188">
    <property type="entry name" value="B302_SPRY"/>
    <property type="match status" value="1"/>
</dbReference>
<dbReference type="PROSITE" id="PS50897">
    <property type="entry name" value="CTLH"/>
    <property type="match status" value="1"/>
</dbReference>
<dbReference type="PROSITE" id="PS50896">
    <property type="entry name" value="LISH"/>
    <property type="match status" value="1"/>
</dbReference>